<sequence>MKRPIFIGITGGTGSGKSTIAKEIYRQFGEECIAMIEQDSYYKDQSHLSMDDRVKTNYDHPNAFDNNLLVSHLESLLNGHCIQKPSYDFSIHNRIEDTTKVEPKEIVIVEGILILEDPRIRELLDIKIYVDTDADVRIIRRMVRDINERGRTIESVINQYLNVVKPMHNQFTEPTKKFADIIIPEGGHNKVAIDIIVAKIKEVLGKYE</sequence>
<protein>
    <recommendedName>
        <fullName evidence="1">Uridine kinase</fullName>
        <ecNumber evidence="1">2.7.1.48</ecNumber>
    </recommendedName>
    <alternativeName>
        <fullName evidence="1">Cytidine monophosphokinase</fullName>
    </alternativeName>
    <alternativeName>
        <fullName evidence="1">Uridine monophosphokinase</fullName>
    </alternativeName>
</protein>
<accession>Q0SS52</accession>
<reference key="1">
    <citation type="journal article" date="2006" name="Genome Res.">
        <title>Skewed genomic variability in strains of the toxigenic bacterial pathogen, Clostridium perfringens.</title>
        <authorList>
            <person name="Myers G.S.A."/>
            <person name="Rasko D.A."/>
            <person name="Cheung J.K."/>
            <person name="Ravel J."/>
            <person name="Seshadri R."/>
            <person name="DeBoy R.T."/>
            <person name="Ren Q."/>
            <person name="Varga J."/>
            <person name="Awad M.M."/>
            <person name="Brinkac L.M."/>
            <person name="Daugherty S.C."/>
            <person name="Haft D.H."/>
            <person name="Dodson R.J."/>
            <person name="Madupu R."/>
            <person name="Nelson W.C."/>
            <person name="Rosovitz M.J."/>
            <person name="Sullivan S.A."/>
            <person name="Khouri H."/>
            <person name="Dimitrov G.I."/>
            <person name="Watkins K.L."/>
            <person name="Mulligan S."/>
            <person name="Benton J."/>
            <person name="Radune D."/>
            <person name="Fisher D.J."/>
            <person name="Atkins H.S."/>
            <person name="Hiscox T."/>
            <person name="Jost B.H."/>
            <person name="Billington S.J."/>
            <person name="Songer J.G."/>
            <person name="McClane B.A."/>
            <person name="Titball R.W."/>
            <person name="Rood J.I."/>
            <person name="Melville S.B."/>
            <person name="Paulsen I.T."/>
        </authorList>
    </citation>
    <scope>NUCLEOTIDE SEQUENCE [LARGE SCALE GENOMIC DNA]</scope>
    <source>
        <strain>SM101 / Type A</strain>
    </source>
</reference>
<feature type="chain" id="PRO_1000017872" description="Uridine kinase">
    <location>
        <begin position="1"/>
        <end position="208"/>
    </location>
</feature>
<feature type="binding site" evidence="1">
    <location>
        <begin position="11"/>
        <end position="18"/>
    </location>
    <ligand>
        <name>ATP</name>
        <dbReference type="ChEBI" id="CHEBI:30616"/>
    </ligand>
</feature>
<comment type="catalytic activity">
    <reaction evidence="1">
        <text>uridine + ATP = UMP + ADP + H(+)</text>
        <dbReference type="Rhea" id="RHEA:16825"/>
        <dbReference type="ChEBI" id="CHEBI:15378"/>
        <dbReference type="ChEBI" id="CHEBI:16704"/>
        <dbReference type="ChEBI" id="CHEBI:30616"/>
        <dbReference type="ChEBI" id="CHEBI:57865"/>
        <dbReference type="ChEBI" id="CHEBI:456216"/>
        <dbReference type="EC" id="2.7.1.48"/>
    </reaction>
</comment>
<comment type="catalytic activity">
    <reaction evidence="1">
        <text>cytidine + ATP = CMP + ADP + H(+)</text>
        <dbReference type="Rhea" id="RHEA:24674"/>
        <dbReference type="ChEBI" id="CHEBI:15378"/>
        <dbReference type="ChEBI" id="CHEBI:17562"/>
        <dbReference type="ChEBI" id="CHEBI:30616"/>
        <dbReference type="ChEBI" id="CHEBI:60377"/>
        <dbReference type="ChEBI" id="CHEBI:456216"/>
        <dbReference type="EC" id="2.7.1.48"/>
    </reaction>
</comment>
<comment type="pathway">
    <text evidence="1">Pyrimidine metabolism; CTP biosynthesis via salvage pathway; CTP from cytidine: step 1/3.</text>
</comment>
<comment type="pathway">
    <text evidence="1">Pyrimidine metabolism; UMP biosynthesis via salvage pathway; UMP from uridine: step 1/1.</text>
</comment>
<comment type="subcellular location">
    <subcellularLocation>
        <location evidence="1">Cytoplasm</location>
    </subcellularLocation>
</comment>
<comment type="similarity">
    <text evidence="1">Belongs to the uridine kinase family.</text>
</comment>
<proteinExistence type="inferred from homology"/>
<evidence type="ECO:0000255" key="1">
    <source>
        <dbReference type="HAMAP-Rule" id="MF_00551"/>
    </source>
</evidence>
<name>URK_CLOPS</name>
<gene>
    <name evidence="1" type="primary">udk</name>
    <name type="ordered locus">CPR_1740</name>
</gene>
<keyword id="KW-0067">ATP-binding</keyword>
<keyword id="KW-0963">Cytoplasm</keyword>
<keyword id="KW-0418">Kinase</keyword>
<keyword id="KW-0547">Nucleotide-binding</keyword>
<keyword id="KW-0808">Transferase</keyword>
<dbReference type="EC" id="2.7.1.48" evidence="1"/>
<dbReference type="EMBL" id="CP000312">
    <property type="protein sequence ID" value="ABG85407.1"/>
    <property type="molecule type" value="Genomic_DNA"/>
</dbReference>
<dbReference type="RefSeq" id="WP_011592650.1">
    <property type="nucleotide sequence ID" value="NC_008262.1"/>
</dbReference>
<dbReference type="SMR" id="Q0SS52"/>
<dbReference type="KEGG" id="cpr:CPR_1740"/>
<dbReference type="UniPathway" id="UPA00574">
    <property type="reaction ID" value="UER00637"/>
</dbReference>
<dbReference type="UniPathway" id="UPA00579">
    <property type="reaction ID" value="UER00640"/>
</dbReference>
<dbReference type="Proteomes" id="UP000001824">
    <property type="component" value="Chromosome"/>
</dbReference>
<dbReference type="GO" id="GO:0005737">
    <property type="term" value="C:cytoplasm"/>
    <property type="evidence" value="ECO:0007669"/>
    <property type="project" value="UniProtKB-SubCell"/>
</dbReference>
<dbReference type="GO" id="GO:0005524">
    <property type="term" value="F:ATP binding"/>
    <property type="evidence" value="ECO:0007669"/>
    <property type="project" value="UniProtKB-UniRule"/>
</dbReference>
<dbReference type="GO" id="GO:0043771">
    <property type="term" value="F:cytidine kinase activity"/>
    <property type="evidence" value="ECO:0007669"/>
    <property type="project" value="RHEA"/>
</dbReference>
<dbReference type="GO" id="GO:0004849">
    <property type="term" value="F:uridine kinase activity"/>
    <property type="evidence" value="ECO:0007669"/>
    <property type="project" value="UniProtKB-UniRule"/>
</dbReference>
<dbReference type="GO" id="GO:0044211">
    <property type="term" value="P:CTP salvage"/>
    <property type="evidence" value="ECO:0007669"/>
    <property type="project" value="UniProtKB-UniRule"/>
</dbReference>
<dbReference type="GO" id="GO:0044206">
    <property type="term" value="P:UMP salvage"/>
    <property type="evidence" value="ECO:0007669"/>
    <property type="project" value="UniProtKB-UniRule"/>
</dbReference>
<dbReference type="CDD" id="cd02023">
    <property type="entry name" value="UMPK"/>
    <property type="match status" value="1"/>
</dbReference>
<dbReference type="Gene3D" id="3.40.50.300">
    <property type="entry name" value="P-loop containing nucleotide triphosphate hydrolases"/>
    <property type="match status" value="1"/>
</dbReference>
<dbReference type="HAMAP" id="MF_00551">
    <property type="entry name" value="Uridine_kinase"/>
    <property type="match status" value="1"/>
</dbReference>
<dbReference type="InterPro" id="IPR027417">
    <property type="entry name" value="P-loop_NTPase"/>
</dbReference>
<dbReference type="InterPro" id="IPR006083">
    <property type="entry name" value="PRK/URK"/>
</dbReference>
<dbReference type="InterPro" id="IPR026008">
    <property type="entry name" value="Uridine_kinase"/>
</dbReference>
<dbReference type="InterPro" id="IPR000764">
    <property type="entry name" value="Uridine_kinase-like"/>
</dbReference>
<dbReference type="NCBIfam" id="NF004018">
    <property type="entry name" value="PRK05480.1"/>
    <property type="match status" value="1"/>
</dbReference>
<dbReference type="NCBIfam" id="TIGR00235">
    <property type="entry name" value="udk"/>
    <property type="match status" value="1"/>
</dbReference>
<dbReference type="PANTHER" id="PTHR10285">
    <property type="entry name" value="URIDINE KINASE"/>
    <property type="match status" value="1"/>
</dbReference>
<dbReference type="Pfam" id="PF00485">
    <property type="entry name" value="PRK"/>
    <property type="match status" value="1"/>
</dbReference>
<dbReference type="PRINTS" id="PR00988">
    <property type="entry name" value="URIDINKINASE"/>
</dbReference>
<dbReference type="SUPFAM" id="SSF52540">
    <property type="entry name" value="P-loop containing nucleoside triphosphate hydrolases"/>
    <property type="match status" value="1"/>
</dbReference>
<organism>
    <name type="scientific">Clostridium perfringens (strain SM101 / Type A)</name>
    <dbReference type="NCBI Taxonomy" id="289380"/>
    <lineage>
        <taxon>Bacteria</taxon>
        <taxon>Bacillati</taxon>
        <taxon>Bacillota</taxon>
        <taxon>Clostridia</taxon>
        <taxon>Eubacteriales</taxon>
        <taxon>Clostridiaceae</taxon>
        <taxon>Clostridium</taxon>
    </lineage>
</organism>